<gene>
    <name evidence="1" type="primary">rny</name>
    <name type="ordered locus">CLI_2459</name>
</gene>
<sequence length="513" mass="58055">MGPTKYIIIAVVIIIICVILGLYVVDKKAKEKLSEASKEARRLKEEAERDAEAKKKEAILEAKEEAHKLRAEVERENRERRNEVQRLERRIIQKEEALDKKSEALENKEEALNKKQQKIEDVEAHMEELHEKQRTELERISGLTTEQAKEFLLEQVRKEVKHETAVMIKEIETKAKEEADKRAREVITYAIQRCAADHVAETTVHVVNLPNDEMKGRIIGREGRNIRTLETLTGVDLIIDDTPEAVILSGFDPIRREVARIALEKLIVDGRIHPARIEEMVEKAKKEVEVSIKEEGEQATFETGIHGLHIELIRLLGRLKYRTSYGQNVLKHSIEVSHLAGLMASELGIDPTLAKRVGLLHDIGKAVDHEVEGPHAIIGSEIAKKYRESALVVNAIGAHHGDMEPQSLEAILVQAADAISAARPGARRETLEAYIKRLEKLEEIANECEGVEKSYAIQAGREIRIMVKPEVLDDTGCIEMARNIVKQIESELEYPGQIKVNVIRETRAIEYAK</sequence>
<dbReference type="EC" id="3.1.-.-" evidence="1"/>
<dbReference type="EMBL" id="CP000728">
    <property type="protein sequence ID" value="ABS42742.1"/>
    <property type="molecule type" value="Genomic_DNA"/>
</dbReference>
<dbReference type="RefSeq" id="WP_012100362.1">
    <property type="nucleotide sequence ID" value="NC_009699.1"/>
</dbReference>
<dbReference type="SMR" id="A7GFZ1"/>
<dbReference type="KEGG" id="cbf:CLI_2459"/>
<dbReference type="HOGENOM" id="CLU_028328_1_0_9"/>
<dbReference type="Proteomes" id="UP000002410">
    <property type="component" value="Chromosome"/>
</dbReference>
<dbReference type="GO" id="GO:0005886">
    <property type="term" value="C:plasma membrane"/>
    <property type="evidence" value="ECO:0007669"/>
    <property type="project" value="UniProtKB-SubCell"/>
</dbReference>
<dbReference type="GO" id="GO:0003723">
    <property type="term" value="F:RNA binding"/>
    <property type="evidence" value="ECO:0007669"/>
    <property type="project" value="UniProtKB-UniRule"/>
</dbReference>
<dbReference type="GO" id="GO:0004521">
    <property type="term" value="F:RNA endonuclease activity"/>
    <property type="evidence" value="ECO:0007669"/>
    <property type="project" value="UniProtKB-UniRule"/>
</dbReference>
<dbReference type="GO" id="GO:0006402">
    <property type="term" value="P:mRNA catabolic process"/>
    <property type="evidence" value="ECO:0007669"/>
    <property type="project" value="UniProtKB-UniRule"/>
</dbReference>
<dbReference type="CDD" id="cd00077">
    <property type="entry name" value="HDc"/>
    <property type="match status" value="1"/>
</dbReference>
<dbReference type="CDD" id="cd22431">
    <property type="entry name" value="KH-I_RNaseY"/>
    <property type="match status" value="1"/>
</dbReference>
<dbReference type="FunFam" id="1.10.3210.10:FF:000003">
    <property type="entry name" value="Ribonuclease Y"/>
    <property type="match status" value="1"/>
</dbReference>
<dbReference type="FunFam" id="3.30.1370.10:FF:000006">
    <property type="entry name" value="Ribonuclease Y"/>
    <property type="match status" value="1"/>
</dbReference>
<dbReference type="Gene3D" id="1.10.3210.10">
    <property type="entry name" value="Hypothetical protein af1432"/>
    <property type="match status" value="1"/>
</dbReference>
<dbReference type="Gene3D" id="3.30.1370.10">
    <property type="entry name" value="K Homology domain, type 1"/>
    <property type="match status" value="1"/>
</dbReference>
<dbReference type="HAMAP" id="MF_00335">
    <property type="entry name" value="RNase_Y"/>
    <property type="match status" value="1"/>
</dbReference>
<dbReference type="InterPro" id="IPR003607">
    <property type="entry name" value="HD/PDEase_dom"/>
</dbReference>
<dbReference type="InterPro" id="IPR006674">
    <property type="entry name" value="HD_domain"/>
</dbReference>
<dbReference type="InterPro" id="IPR006675">
    <property type="entry name" value="HDIG_dom"/>
</dbReference>
<dbReference type="InterPro" id="IPR004087">
    <property type="entry name" value="KH_dom"/>
</dbReference>
<dbReference type="InterPro" id="IPR004088">
    <property type="entry name" value="KH_dom_type_1"/>
</dbReference>
<dbReference type="InterPro" id="IPR036612">
    <property type="entry name" value="KH_dom_type_1_sf"/>
</dbReference>
<dbReference type="InterPro" id="IPR017705">
    <property type="entry name" value="Ribonuclease_Y"/>
</dbReference>
<dbReference type="InterPro" id="IPR022711">
    <property type="entry name" value="RNase_Y_N"/>
</dbReference>
<dbReference type="NCBIfam" id="TIGR00277">
    <property type="entry name" value="HDIG"/>
    <property type="match status" value="1"/>
</dbReference>
<dbReference type="NCBIfam" id="TIGR03319">
    <property type="entry name" value="RNase_Y"/>
    <property type="match status" value="1"/>
</dbReference>
<dbReference type="PANTHER" id="PTHR12826">
    <property type="entry name" value="RIBONUCLEASE Y"/>
    <property type="match status" value="1"/>
</dbReference>
<dbReference type="PANTHER" id="PTHR12826:SF15">
    <property type="entry name" value="RIBONUCLEASE Y"/>
    <property type="match status" value="1"/>
</dbReference>
<dbReference type="Pfam" id="PF01966">
    <property type="entry name" value="HD"/>
    <property type="match status" value="1"/>
</dbReference>
<dbReference type="Pfam" id="PF00013">
    <property type="entry name" value="KH_1"/>
    <property type="match status" value="1"/>
</dbReference>
<dbReference type="Pfam" id="PF12072">
    <property type="entry name" value="RNase_Y_N"/>
    <property type="match status" value="1"/>
</dbReference>
<dbReference type="SMART" id="SM00471">
    <property type="entry name" value="HDc"/>
    <property type="match status" value="1"/>
</dbReference>
<dbReference type="SMART" id="SM00322">
    <property type="entry name" value="KH"/>
    <property type="match status" value="1"/>
</dbReference>
<dbReference type="SUPFAM" id="SSF54791">
    <property type="entry name" value="Eukaryotic type KH-domain (KH-domain type I)"/>
    <property type="match status" value="1"/>
</dbReference>
<dbReference type="SUPFAM" id="SSF109604">
    <property type="entry name" value="HD-domain/PDEase-like"/>
    <property type="match status" value="1"/>
</dbReference>
<dbReference type="PROSITE" id="PS51831">
    <property type="entry name" value="HD"/>
    <property type="match status" value="1"/>
</dbReference>
<dbReference type="PROSITE" id="PS50084">
    <property type="entry name" value="KH_TYPE_1"/>
    <property type="match status" value="1"/>
</dbReference>
<name>RNY_CLOBL</name>
<proteinExistence type="inferred from homology"/>
<keyword id="KW-1003">Cell membrane</keyword>
<keyword id="KW-0255">Endonuclease</keyword>
<keyword id="KW-0378">Hydrolase</keyword>
<keyword id="KW-0472">Membrane</keyword>
<keyword id="KW-0540">Nuclease</keyword>
<keyword id="KW-0694">RNA-binding</keyword>
<keyword id="KW-0812">Transmembrane</keyword>
<keyword id="KW-1133">Transmembrane helix</keyword>
<accession>A7GFZ1</accession>
<reference key="1">
    <citation type="submission" date="2007-06" db="EMBL/GenBank/DDBJ databases">
        <authorList>
            <person name="Brinkac L.M."/>
            <person name="Daugherty S."/>
            <person name="Dodson R.J."/>
            <person name="Madupu R."/>
            <person name="Brown J.L."/>
            <person name="Bruce D."/>
            <person name="Detter C."/>
            <person name="Munk C."/>
            <person name="Smith L.A."/>
            <person name="Smith T.J."/>
            <person name="White O."/>
            <person name="Brettin T.S."/>
        </authorList>
    </citation>
    <scope>NUCLEOTIDE SEQUENCE [LARGE SCALE GENOMIC DNA]</scope>
    <source>
        <strain>Langeland / NCTC 10281 / Type F</strain>
    </source>
</reference>
<comment type="function">
    <text evidence="1">Endoribonuclease that initiates mRNA decay.</text>
</comment>
<comment type="subcellular location">
    <subcellularLocation>
        <location evidence="1">Cell membrane</location>
        <topology evidence="1">Single-pass membrane protein</topology>
    </subcellularLocation>
</comment>
<comment type="similarity">
    <text evidence="1">Belongs to the RNase Y family.</text>
</comment>
<organism>
    <name type="scientific">Clostridium botulinum (strain Langeland / NCTC 10281 / Type F)</name>
    <dbReference type="NCBI Taxonomy" id="441772"/>
    <lineage>
        <taxon>Bacteria</taxon>
        <taxon>Bacillati</taxon>
        <taxon>Bacillota</taxon>
        <taxon>Clostridia</taxon>
        <taxon>Eubacteriales</taxon>
        <taxon>Clostridiaceae</taxon>
        <taxon>Clostridium</taxon>
    </lineage>
</organism>
<feature type="chain" id="PRO_0000344847" description="Ribonuclease Y">
    <location>
        <begin position="1"/>
        <end position="513"/>
    </location>
</feature>
<feature type="transmembrane region" description="Helical" evidence="1">
    <location>
        <begin position="6"/>
        <end position="26"/>
    </location>
</feature>
<feature type="domain" description="KH" evidence="1">
    <location>
        <begin position="203"/>
        <end position="288"/>
    </location>
</feature>
<feature type="domain" description="HD" evidence="2">
    <location>
        <begin position="329"/>
        <end position="422"/>
    </location>
</feature>
<evidence type="ECO:0000255" key="1">
    <source>
        <dbReference type="HAMAP-Rule" id="MF_00335"/>
    </source>
</evidence>
<evidence type="ECO:0000255" key="2">
    <source>
        <dbReference type="PROSITE-ProRule" id="PRU01175"/>
    </source>
</evidence>
<protein>
    <recommendedName>
        <fullName evidence="1">Ribonuclease Y</fullName>
        <shortName evidence="1">RNase Y</shortName>
        <ecNumber evidence="1">3.1.-.-</ecNumber>
    </recommendedName>
</protein>